<organism>
    <name type="scientific">Arabidopsis thaliana</name>
    <name type="common">Mouse-ear cress</name>
    <dbReference type="NCBI Taxonomy" id="3702"/>
    <lineage>
        <taxon>Eukaryota</taxon>
        <taxon>Viridiplantae</taxon>
        <taxon>Streptophyta</taxon>
        <taxon>Embryophyta</taxon>
        <taxon>Tracheophyta</taxon>
        <taxon>Spermatophyta</taxon>
        <taxon>Magnoliopsida</taxon>
        <taxon>eudicotyledons</taxon>
        <taxon>Gunneridae</taxon>
        <taxon>Pentapetalae</taxon>
        <taxon>rosids</taxon>
        <taxon>malvids</taxon>
        <taxon>Brassicales</taxon>
        <taxon>Brassicaceae</taxon>
        <taxon>Camelineae</taxon>
        <taxon>Arabidopsis</taxon>
    </lineage>
</organism>
<sequence length="513" mass="56787">MATLFLTILLATVLFLILRIFSHRRNRSHNNRLPPGPNPWPIIGNLPHMGTKPHRTLSAMVTTYGPILHLRLGFVDVVVAASKSVAEQFLKIHDANFASRPPNSGAKHMAYNYQDLVFAPYGHRWRLLRKISSVHLFSAKALEDFKHVRQEEVGTLTRELVRVGTKPVNLGQLVNMCVVNALGREMIGRRLFGADADHKADEFRSMVTEMMALAGVFNIGDFVPSLDWLDLQGVAGKMKRLHKRFDAFLSSILKEHEMNGQDQKHTDMLSTLISLKGTDLDGDGGSLTDTEIKALLLNMFTAGTDTSASTVDWAIAELIRHPDIMVKAQEELDIVVGRDRPVNESDIAQLPYLQAVIKENFRLHPPTPLSLPHIASESCEINGYHIPKGSTLLTNIWAIARDPDQWSDPLAFKPERFLPGGEKSGVDVKGSDFELIPFGAGRRICAGLSLGLRTIQFLTATLVQGFDWELAGGVTPEKLNMEESYGLTLQRAVPLVVHPKPRLAPNVYGLGSG</sequence>
<dbReference type="EC" id="1.14.14.82"/>
<dbReference type="EMBL" id="AF271651">
    <property type="protein sequence ID" value="AAG16746.1"/>
    <property type="molecule type" value="mRNA"/>
</dbReference>
<dbReference type="EMBL" id="AF271650">
    <property type="protein sequence ID" value="AAG16745.1"/>
    <property type="molecule type" value="mRNA"/>
</dbReference>
<dbReference type="EMBL" id="AF155171">
    <property type="protein sequence ID" value="AAF73253.1"/>
    <property type="molecule type" value="Genomic_DNA"/>
</dbReference>
<dbReference type="EMBL" id="AH009204">
    <property type="protein sequence ID" value="AAF60189.1"/>
    <property type="molecule type" value="Genomic_DNA"/>
</dbReference>
<dbReference type="EMBL" id="AL133421">
    <property type="protein sequence ID" value="CAB62611.1"/>
    <property type="molecule type" value="Genomic_DNA"/>
</dbReference>
<dbReference type="EMBL" id="CP002688">
    <property type="protein sequence ID" value="AED91232.1"/>
    <property type="molecule type" value="Genomic_DNA"/>
</dbReference>
<dbReference type="PIR" id="T45624">
    <property type="entry name" value="T45624"/>
</dbReference>
<dbReference type="RefSeq" id="NP_196416.1">
    <property type="nucleotide sequence ID" value="NM_120881.3"/>
</dbReference>
<dbReference type="SMR" id="Q9SD85"/>
<dbReference type="BioGRID" id="15971">
    <property type="interactions" value="1"/>
</dbReference>
<dbReference type="FunCoup" id="Q9SD85">
    <property type="interactions" value="549"/>
</dbReference>
<dbReference type="STRING" id="3702.Q9SD85"/>
<dbReference type="PaxDb" id="3702-AT5G07990.1"/>
<dbReference type="ProteomicsDB" id="222359"/>
<dbReference type="EnsemblPlants" id="AT5G07990.1">
    <property type="protein sequence ID" value="AT5G07990.1"/>
    <property type="gene ID" value="AT5G07990"/>
</dbReference>
<dbReference type="GeneID" id="830693"/>
<dbReference type="Gramene" id="AT5G07990.1">
    <property type="protein sequence ID" value="AT5G07990.1"/>
    <property type="gene ID" value="AT5G07990"/>
</dbReference>
<dbReference type="KEGG" id="ath:AT5G07990"/>
<dbReference type="Araport" id="AT5G07990"/>
<dbReference type="TAIR" id="AT5G07990">
    <property type="gene designation" value="TT7"/>
</dbReference>
<dbReference type="eggNOG" id="KOG0156">
    <property type="taxonomic scope" value="Eukaryota"/>
</dbReference>
<dbReference type="HOGENOM" id="CLU_001570_4_0_1"/>
<dbReference type="InParanoid" id="Q9SD85"/>
<dbReference type="OMA" id="QIRLGNC"/>
<dbReference type="PhylomeDB" id="Q9SD85"/>
<dbReference type="BioCyc" id="MetaCyc:AT5G07990-MONOMER"/>
<dbReference type="BRENDA" id="1.14.14.82">
    <property type="organism ID" value="399"/>
</dbReference>
<dbReference type="UniPathway" id="UPA00154"/>
<dbReference type="PRO" id="PR:Q9SD85"/>
<dbReference type="Proteomes" id="UP000006548">
    <property type="component" value="Chromosome 5"/>
</dbReference>
<dbReference type="ExpressionAtlas" id="Q9SD85">
    <property type="expression patterns" value="baseline and differential"/>
</dbReference>
<dbReference type="GO" id="GO:0005789">
    <property type="term" value="C:endoplasmic reticulum membrane"/>
    <property type="evidence" value="ECO:0007669"/>
    <property type="project" value="UniProtKB-SubCell"/>
</dbReference>
<dbReference type="GO" id="GO:0016711">
    <property type="term" value="F:flavonoid 3'-monooxygenase activity"/>
    <property type="evidence" value="ECO:0007669"/>
    <property type="project" value="UniProtKB-EC"/>
</dbReference>
<dbReference type="GO" id="GO:0020037">
    <property type="term" value="F:heme binding"/>
    <property type="evidence" value="ECO:0007669"/>
    <property type="project" value="InterPro"/>
</dbReference>
<dbReference type="GO" id="GO:0005506">
    <property type="term" value="F:iron ion binding"/>
    <property type="evidence" value="ECO:0007669"/>
    <property type="project" value="InterPro"/>
</dbReference>
<dbReference type="GO" id="GO:0009813">
    <property type="term" value="P:flavonoid biosynthetic process"/>
    <property type="evidence" value="ECO:0007669"/>
    <property type="project" value="UniProtKB-UniPathway"/>
</dbReference>
<dbReference type="GO" id="GO:0009733">
    <property type="term" value="P:response to auxin"/>
    <property type="evidence" value="ECO:0000270"/>
    <property type="project" value="TAIR"/>
</dbReference>
<dbReference type="CDD" id="cd20657">
    <property type="entry name" value="CYP75"/>
    <property type="match status" value="1"/>
</dbReference>
<dbReference type="FunFam" id="1.10.630.10:FF:000056">
    <property type="entry name" value="Red aleurone1"/>
    <property type="match status" value="1"/>
</dbReference>
<dbReference type="Gene3D" id="1.10.630.10">
    <property type="entry name" value="Cytochrome P450"/>
    <property type="match status" value="1"/>
</dbReference>
<dbReference type="InterPro" id="IPR001128">
    <property type="entry name" value="Cyt_P450"/>
</dbReference>
<dbReference type="InterPro" id="IPR017972">
    <property type="entry name" value="Cyt_P450_CS"/>
</dbReference>
<dbReference type="InterPro" id="IPR002401">
    <property type="entry name" value="Cyt_P450_E_grp-I"/>
</dbReference>
<dbReference type="InterPro" id="IPR036396">
    <property type="entry name" value="Cyt_P450_sf"/>
</dbReference>
<dbReference type="PANTHER" id="PTHR47944">
    <property type="entry name" value="CYTOCHROME P450 98A9"/>
    <property type="match status" value="1"/>
</dbReference>
<dbReference type="PANTHER" id="PTHR47944:SF18">
    <property type="entry name" value="FLAVONOID 3'-MONOOXYGENASE"/>
    <property type="match status" value="1"/>
</dbReference>
<dbReference type="Pfam" id="PF00067">
    <property type="entry name" value="p450"/>
    <property type="match status" value="1"/>
</dbReference>
<dbReference type="PRINTS" id="PR00463">
    <property type="entry name" value="EP450I"/>
</dbReference>
<dbReference type="PRINTS" id="PR00385">
    <property type="entry name" value="P450"/>
</dbReference>
<dbReference type="SUPFAM" id="SSF48264">
    <property type="entry name" value="Cytochrome P450"/>
    <property type="match status" value="1"/>
</dbReference>
<dbReference type="PROSITE" id="PS00086">
    <property type="entry name" value="CYTOCHROME_P450"/>
    <property type="match status" value="1"/>
</dbReference>
<name>F3PH_ARATH</name>
<protein>
    <recommendedName>
        <fullName>Flavonoid 3'-monooxygenase</fullName>
        <ecNumber>1.14.14.82</ecNumber>
    </recommendedName>
    <alternativeName>
        <fullName>Cytochrome P450 75B1</fullName>
    </alternativeName>
    <alternativeName>
        <fullName>Flavonoid 3'-hydroxylase</fullName>
        <shortName>AtF3'H</shortName>
    </alternativeName>
    <alternativeName>
        <fullName>Protein TRANSPARENT TESTA 7</fullName>
    </alternativeName>
</protein>
<gene>
    <name type="primary">CYP75B1</name>
    <name type="synonym">F3'H</name>
    <name type="synonym">TT7</name>
    <name type="ordered locus">At5g07990</name>
    <name type="ORF">F13G24.190</name>
</gene>
<accession>Q9SD85</accession>
<evidence type="ECO:0000250" key="1"/>
<evidence type="ECO:0000255" key="2"/>
<evidence type="ECO:0000305" key="3"/>
<keyword id="KW-0256">Endoplasmic reticulum</keyword>
<keyword id="KW-0284">Flavonoid biosynthesis</keyword>
<keyword id="KW-0349">Heme</keyword>
<keyword id="KW-0408">Iron</keyword>
<keyword id="KW-0472">Membrane</keyword>
<keyword id="KW-0479">Metal-binding</keyword>
<keyword id="KW-0503">Monooxygenase</keyword>
<keyword id="KW-0521">NADP</keyword>
<keyword id="KW-0560">Oxidoreductase</keyword>
<keyword id="KW-1185">Reference proteome</keyword>
<keyword id="KW-0812">Transmembrane</keyword>
<keyword id="KW-1133">Transmembrane helix</keyword>
<feature type="chain" id="PRO_0000052136" description="Flavonoid 3'-monooxygenase">
    <location>
        <begin position="1"/>
        <end position="513"/>
    </location>
</feature>
<feature type="transmembrane region" description="Helical" evidence="2">
    <location>
        <begin position="1"/>
        <end position="21"/>
    </location>
</feature>
<feature type="topological domain" description="Cytoplasmic" evidence="2">
    <location>
        <begin position="22"/>
        <end position="513"/>
    </location>
</feature>
<feature type="binding site" description="axial binding residue" evidence="1">
    <location>
        <position position="445"/>
    </location>
    <ligand>
        <name>heme</name>
        <dbReference type="ChEBI" id="CHEBI:30413"/>
    </ligand>
    <ligandPart>
        <name>Fe</name>
        <dbReference type="ChEBI" id="CHEBI:18248"/>
    </ligandPart>
</feature>
<proteinExistence type="evidence at protein level"/>
<reference key="1">
    <citation type="journal article" date="2000" name="Biol. Chem.">
        <title>Identification of the Arabidopsis thaliana flavonoid 3'-hydroxylase gene and functional expression of the encoded P450 enzyme.</title>
        <authorList>
            <person name="Schoenbohm C."/>
            <person name="Martens S."/>
            <person name="Eder C."/>
            <person name="Forkmann G."/>
            <person name="Weisshaar B."/>
        </authorList>
    </citation>
    <scope>NUCLEOTIDE SEQUENCE [MRNA]</scope>
    <source>
        <strain>cv. Columbia</strain>
        <strain>cv. Landsberg erecta</strain>
    </source>
</reference>
<reference key="2">
    <citation type="submission" date="1999-05" db="EMBL/GenBank/DDBJ databases">
        <title>Isolation of a flavonoid 3'-hydroxylase gene corresponding to the Tt7 locus of Arabidopsis thaliana.</title>
        <authorList>
            <person name="Cordiner T.D."/>
            <person name="Barri-Rewell G."/>
            <person name="Brugliera F."/>
            <person name="Cobbett C."/>
            <person name="Holton T.A."/>
        </authorList>
    </citation>
    <scope>NUCLEOTIDE SEQUENCE [GENOMIC DNA]</scope>
    <source>
        <strain>cv. Landsberg erecta</strain>
    </source>
</reference>
<reference key="3">
    <citation type="submission" date="2000-03" db="EMBL/GenBank/DDBJ databases">
        <title>Sequence of flavonoid 3'hydroxylase (F3'H).</title>
        <authorList>
            <person name="Saslowsky D."/>
            <person name="Winkel-Shirley B."/>
        </authorList>
    </citation>
    <scope>NUCLEOTIDE SEQUENCE [GENOMIC DNA]</scope>
    <source>
        <strain>cv. Landsberg erecta</strain>
    </source>
</reference>
<reference key="4">
    <citation type="journal article" date="2000" name="Nature">
        <title>Sequence and analysis of chromosome 5 of the plant Arabidopsis thaliana.</title>
        <authorList>
            <person name="Tabata S."/>
            <person name="Kaneko T."/>
            <person name="Nakamura Y."/>
            <person name="Kotani H."/>
            <person name="Kato T."/>
            <person name="Asamizu E."/>
            <person name="Miyajima N."/>
            <person name="Sasamoto S."/>
            <person name="Kimura T."/>
            <person name="Hosouchi T."/>
            <person name="Kawashima K."/>
            <person name="Kohara M."/>
            <person name="Matsumoto M."/>
            <person name="Matsuno A."/>
            <person name="Muraki A."/>
            <person name="Nakayama S."/>
            <person name="Nakazaki N."/>
            <person name="Naruo K."/>
            <person name="Okumura S."/>
            <person name="Shinpo S."/>
            <person name="Takeuchi C."/>
            <person name="Wada T."/>
            <person name="Watanabe A."/>
            <person name="Yamada M."/>
            <person name="Yasuda M."/>
            <person name="Sato S."/>
            <person name="de la Bastide M."/>
            <person name="Huang E."/>
            <person name="Spiegel L."/>
            <person name="Gnoj L."/>
            <person name="O'Shaughnessy A."/>
            <person name="Preston R."/>
            <person name="Habermann K."/>
            <person name="Murray J."/>
            <person name="Johnson D."/>
            <person name="Rohlfing T."/>
            <person name="Nelson J."/>
            <person name="Stoneking T."/>
            <person name="Pepin K."/>
            <person name="Spieth J."/>
            <person name="Sekhon M."/>
            <person name="Armstrong J."/>
            <person name="Becker M."/>
            <person name="Belter E."/>
            <person name="Cordum H."/>
            <person name="Cordes M."/>
            <person name="Courtney L."/>
            <person name="Courtney W."/>
            <person name="Dante M."/>
            <person name="Du H."/>
            <person name="Edwards J."/>
            <person name="Fryman J."/>
            <person name="Haakensen B."/>
            <person name="Lamar E."/>
            <person name="Latreille P."/>
            <person name="Leonard S."/>
            <person name="Meyer R."/>
            <person name="Mulvaney E."/>
            <person name="Ozersky P."/>
            <person name="Riley A."/>
            <person name="Strowmatt C."/>
            <person name="Wagner-McPherson C."/>
            <person name="Wollam A."/>
            <person name="Yoakum M."/>
            <person name="Bell M."/>
            <person name="Dedhia N."/>
            <person name="Parnell L."/>
            <person name="Shah R."/>
            <person name="Rodriguez M."/>
            <person name="Hoon See L."/>
            <person name="Vil D."/>
            <person name="Baker J."/>
            <person name="Kirchoff K."/>
            <person name="Toth K."/>
            <person name="King L."/>
            <person name="Bahret A."/>
            <person name="Miller B."/>
            <person name="Marra M.A."/>
            <person name="Martienssen R."/>
            <person name="McCombie W.R."/>
            <person name="Wilson R.K."/>
            <person name="Murphy G."/>
            <person name="Bancroft I."/>
            <person name="Volckaert G."/>
            <person name="Wambutt R."/>
            <person name="Duesterhoeft A."/>
            <person name="Stiekema W."/>
            <person name="Pohl T."/>
            <person name="Entian K.-D."/>
            <person name="Terryn N."/>
            <person name="Hartley N."/>
            <person name="Bent E."/>
            <person name="Johnson S."/>
            <person name="Langham S.-A."/>
            <person name="McCullagh B."/>
            <person name="Robben J."/>
            <person name="Grymonprez B."/>
            <person name="Zimmermann W."/>
            <person name="Ramsperger U."/>
            <person name="Wedler H."/>
            <person name="Balke K."/>
            <person name="Wedler E."/>
            <person name="Peters S."/>
            <person name="van Staveren M."/>
            <person name="Dirkse W."/>
            <person name="Mooijman P."/>
            <person name="Klein Lankhorst R."/>
            <person name="Weitzenegger T."/>
            <person name="Bothe G."/>
            <person name="Rose M."/>
            <person name="Hauf J."/>
            <person name="Berneiser S."/>
            <person name="Hempel S."/>
            <person name="Feldpausch M."/>
            <person name="Lamberth S."/>
            <person name="Villarroel R."/>
            <person name="Gielen J."/>
            <person name="Ardiles W."/>
            <person name="Bents O."/>
            <person name="Lemcke K."/>
            <person name="Kolesov G."/>
            <person name="Mayer K.F.X."/>
            <person name="Rudd S."/>
            <person name="Schoof H."/>
            <person name="Schueller C."/>
            <person name="Zaccaria P."/>
            <person name="Mewes H.-W."/>
            <person name="Bevan M."/>
            <person name="Fransz P.F."/>
        </authorList>
    </citation>
    <scope>NUCLEOTIDE SEQUENCE [LARGE SCALE GENOMIC DNA]</scope>
    <source>
        <strain>cv. Columbia</strain>
    </source>
</reference>
<reference key="5">
    <citation type="journal article" date="2017" name="Plant J.">
        <title>Araport11: a complete reannotation of the Arabidopsis thaliana reference genome.</title>
        <authorList>
            <person name="Cheng C.Y."/>
            <person name="Krishnakumar V."/>
            <person name="Chan A.P."/>
            <person name="Thibaud-Nissen F."/>
            <person name="Schobel S."/>
            <person name="Town C.D."/>
        </authorList>
    </citation>
    <scope>GENOME REANNOTATION</scope>
    <source>
        <strain>cv. Columbia</strain>
    </source>
</reference>
<reference key="6">
    <citation type="journal article" date="2001" name="Plant J.">
        <title>Localization of flavonoid enzymes in Arabidopsis roots.</title>
        <authorList>
            <person name="Saslowsky D."/>
            <person name="Winkel-Shirley B."/>
        </authorList>
    </citation>
    <scope>CHARACTERIZATION</scope>
</reference>
<reference key="7">
    <citation type="journal article" date="2013" name="Plant Physiol. Biochem.">
        <title>The flavonoid biosynthetic pathway in Arabidopsis: Structural and genetic diversity.</title>
        <authorList>
            <person name="Saito K."/>
            <person name="Yonekura-Sakakibara K."/>
            <person name="Nakabayashi R."/>
            <person name="Higashi Y."/>
            <person name="Yamazaki M."/>
            <person name="Tohge T."/>
            <person name="Fernie A.R."/>
        </authorList>
    </citation>
    <scope>REVIEW</scope>
    <scope>NOMENCLATURE</scope>
</reference>
<comment type="function">
    <text>Catalyzes the 3'-hydroxylation of the flavonoid B-ring to the 3',4'-hydroxylated state. Convert naringenin to eriodictyol and dihydrokaempferol to dihydroquercetin.</text>
</comment>
<comment type="catalytic activity">
    <reaction>
        <text>a 3'-unsubstituted flavone + reduced [NADPH--hemoprotein reductase] + O2 = a 3'-hydroxyflavone + oxidized [NADPH--hemoprotein reductase] + H2O + H(+)</text>
        <dbReference type="Rhea" id="RHEA:16337"/>
        <dbReference type="Rhea" id="RHEA-COMP:11964"/>
        <dbReference type="Rhea" id="RHEA-COMP:11965"/>
        <dbReference type="ChEBI" id="CHEBI:15377"/>
        <dbReference type="ChEBI" id="CHEBI:15378"/>
        <dbReference type="ChEBI" id="CHEBI:15379"/>
        <dbReference type="ChEBI" id="CHEBI:27741"/>
        <dbReference type="ChEBI" id="CHEBI:57618"/>
        <dbReference type="ChEBI" id="CHEBI:58210"/>
        <dbReference type="ChEBI" id="CHEBI:138726"/>
        <dbReference type="EC" id="1.14.14.82"/>
    </reaction>
</comment>
<comment type="cofactor">
    <cofactor evidence="1">
        <name>heme</name>
        <dbReference type="ChEBI" id="CHEBI:30413"/>
    </cofactor>
</comment>
<comment type="pathway">
    <text>Secondary metabolite biosynthesis; flavonoid biosynthesis.</text>
</comment>
<comment type="subcellular location">
    <subcellularLocation>
        <location evidence="3">Endoplasmic reticulum membrane</location>
        <topology evidence="3">Single-pass type III membrane protein</topology>
    </subcellularLocation>
</comment>
<comment type="tissue specificity">
    <text>High expression in siliques and to a lower extent in stems, flowers and senescing leaves.</text>
</comment>
<comment type="induction">
    <text>By UV light treatment.</text>
</comment>
<comment type="miscellaneous">
    <text>May act as a membrane anchor for localization of other, soluble, flavonoid enzymes to the endoplasmic reticulum.</text>
</comment>
<comment type="similarity">
    <text evidence="3">Belongs to the cytochrome P450 family.</text>
</comment>